<proteinExistence type="evidence at protein level"/>
<gene>
    <name type="primary">TPS18</name>
    <name type="ordered locus">At3g14520</name>
    <name type="ORF">MIE1.2</name>
</gene>
<keyword id="KW-0002">3D-structure</keyword>
<keyword id="KW-0963">Cytoplasm</keyword>
<keyword id="KW-0456">Lyase</keyword>
<keyword id="KW-0460">Magnesium</keyword>
<keyword id="KW-0464">Manganese</keyword>
<keyword id="KW-0479">Metal-binding</keyword>
<keyword id="KW-1185">Reference proteome</keyword>
<protein>
    <recommendedName>
        <fullName>Terpenoid synthase 18</fullName>
        <shortName>AtTPS18</shortName>
        <ecNumber>4.2.3.-</ecNumber>
    </recommendedName>
</protein>
<organism>
    <name type="scientific">Arabidopsis thaliana</name>
    <name type="common">Mouse-ear cress</name>
    <dbReference type="NCBI Taxonomy" id="3702"/>
    <lineage>
        <taxon>Eukaryota</taxon>
        <taxon>Viridiplantae</taxon>
        <taxon>Streptophyta</taxon>
        <taxon>Embryophyta</taxon>
        <taxon>Tracheophyta</taxon>
        <taxon>Spermatophyta</taxon>
        <taxon>Magnoliopsida</taxon>
        <taxon>eudicotyledons</taxon>
        <taxon>Gunneridae</taxon>
        <taxon>Pentapetalae</taxon>
        <taxon>rosids</taxon>
        <taxon>malvids</taxon>
        <taxon>Brassicales</taxon>
        <taxon>Brassicaceae</taxon>
        <taxon>Camelineae</taxon>
        <taxon>Arabidopsis</taxon>
    </lineage>
</organism>
<feature type="chain" id="PRO_0000403709" description="Terpenoid synthase 18">
    <location>
        <begin position="1"/>
        <end position="605"/>
    </location>
</feature>
<feature type="short sequence motif" description="DDXXD motif">
    <location>
        <begin position="356"/>
        <end position="360"/>
    </location>
</feature>
<feature type="binding site" evidence="1">
    <location>
        <position position="356"/>
    </location>
    <ligand>
        <name>Mg(2+)</name>
        <dbReference type="ChEBI" id="CHEBI:18420"/>
        <label>1</label>
    </ligand>
</feature>
<feature type="binding site" evidence="1">
    <location>
        <position position="356"/>
    </location>
    <ligand>
        <name>Mg(2+)</name>
        <dbReference type="ChEBI" id="CHEBI:18420"/>
        <label>2</label>
    </ligand>
</feature>
<feature type="binding site" evidence="1">
    <location>
        <position position="360"/>
    </location>
    <ligand>
        <name>Mg(2+)</name>
        <dbReference type="ChEBI" id="CHEBI:18420"/>
        <label>1</label>
    </ligand>
</feature>
<feature type="binding site" evidence="1">
    <location>
        <position position="360"/>
    </location>
    <ligand>
        <name>Mg(2+)</name>
        <dbReference type="ChEBI" id="CHEBI:18420"/>
        <label>2</label>
    </ligand>
</feature>
<feature type="binding site" evidence="1">
    <location>
        <position position="500"/>
    </location>
    <ligand>
        <name>Mg(2+)</name>
        <dbReference type="ChEBI" id="CHEBI:18420"/>
        <label>3</label>
    </ligand>
</feature>
<feature type="binding site" evidence="1">
    <location>
        <position position="504"/>
    </location>
    <ligand>
        <name>Mg(2+)</name>
        <dbReference type="ChEBI" id="CHEBI:18420"/>
        <label>3</label>
    </ligand>
</feature>
<feature type="binding site" evidence="1">
    <location>
        <position position="508"/>
    </location>
    <ligand>
        <name>Mg(2+)</name>
        <dbReference type="ChEBI" id="CHEBI:18420"/>
        <label>3</label>
    </ligand>
</feature>
<feature type="sequence conflict" description="In Ref. 1; AAO85537." evidence="3" ref="1">
    <original>AKK</original>
    <variation>VKR</variation>
    <location>
        <begin position="42"/>
        <end position="44"/>
    </location>
</feature>
<feature type="sequence conflict" description="In Ref. 1; AAO85537." evidence="3" ref="1">
    <original>DSWIG</original>
    <variation>ESWIA</variation>
    <location>
        <begin position="228"/>
        <end position="232"/>
    </location>
</feature>
<feature type="sequence conflict" description="In Ref. 1; AAO85537." evidence="3" ref="1">
    <original>HNK</original>
    <variation>YDE</variation>
    <location>
        <begin position="276"/>
        <end position="278"/>
    </location>
</feature>
<feature type="sequence conflict" description="In Ref. 1; AAO85537." evidence="3" ref="1">
    <original>FCQFH</original>
    <variation>LCQFR</variation>
    <location>
        <begin position="290"/>
        <end position="294"/>
    </location>
</feature>
<feature type="sequence conflict" description="In Ref. 1; AAO85537." evidence="3" ref="1">
    <original>T</original>
    <variation>I</variation>
    <location>
        <position position="392"/>
    </location>
</feature>
<feature type="sequence conflict" description="In Ref. 1; AAO85537." evidence="3" ref="1">
    <original>D</original>
    <variation>H</variation>
    <location>
        <position position="442"/>
    </location>
</feature>
<feature type="sequence conflict" description="In Ref. 1; AAO85537." evidence="3" ref="1">
    <original>V</original>
    <variation>I</variation>
    <location>
        <position position="473"/>
    </location>
</feature>
<feature type="helix" evidence="4">
    <location>
        <begin position="74"/>
        <end position="79"/>
    </location>
</feature>
<feature type="helix" evidence="4">
    <location>
        <begin position="84"/>
        <end position="106"/>
    </location>
</feature>
<feature type="strand" evidence="4">
    <location>
        <begin position="108"/>
        <end position="110"/>
    </location>
</feature>
<feature type="helix" evidence="4">
    <location>
        <begin position="112"/>
        <end position="124"/>
    </location>
</feature>
<feature type="helix" evidence="4">
    <location>
        <begin position="128"/>
        <end position="131"/>
    </location>
</feature>
<feature type="helix" evidence="4">
    <location>
        <begin position="132"/>
        <end position="144"/>
    </location>
</feature>
<feature type="helix" evidence="4">
    <location>
        <begin position="146"/>
        <end position="150"/>
    </location>
</feature>
<feature type="helix" evidence="4">
    <location>
        <begin position="156"/>
        <end position="168"/>
    </location>
</feature>
<feature type="helix" evidence="4">
    <location>
        <begin position="175"/>
        <end position="181"/>
    </location>
</feature>
<feature type="strand" evidence="4">
    <location>
        <begin position="184"/>
        <end position="188"/>
    </location>
</feature>
<feature type="turn" evidence="4">
    <location>
        <begin position="190"/>
        <end position="193"/>
    </location>
</feature>
<feature type="helix" evidence="4">
    <location>
        <begin position="196"/>
        <end position="205"/>
    </location>
</feature>
<feature type="helix" evidence="4">
    <location>
        <begin position="214"/>
        <end position="231"/>
    </location>
</feature>
<feature type="strand" evidence="5">
    <location>
        <begin position="233"/>
        <end position="235"/>
    </location>
</feature>
<feature type="helix" evidence="4">
    <location>
        <begin position="236"/>
        <end position="238"/>
    </location>
</feature>
<feature type="helix" evidence="4">
    <location>
        <begin position="240"/>
        <end position="251"/>
    </location>
</feature>
<feature type="helix" evidence="4">
    <location>
        <begin position="254"/>
        <end position="256"/>
    </location>
</feature>
<feature type="helix" evidence="4">
    <location>
        <begin position="259"/>
        <end position="271"/>
    </location>
</feature>
<feature type="helix" evidence="4">
    <location>
        <begin position="278"/>
        <end position="309"/>
    </location>
</feature>
<feature type="helix" evidence="4">
    <location>
        <begin position="311"/>
        <end position="314"/>
    </location>
</feature>
<feature type="helix" evidence="4">
    <location>
        <begin position="322"/>
        <end position="330"/>
    </location>
</feature>
<feature type="helix" evidence="4">
    <location>
        <begin position="336"/>
        <end position="338"/>
    </location>
</feature>
<feature type="helix" evidence="4">
    <location>
        <begin position="339"/>
        <end position="358"/>
    </location>
</feature>
<feature type="helix" evidence="4">
    <location>
        <begin position="365"/>
        <end position="377"/>
    </location>
</feature>
<feature type="helix" evidence="4">
    <location>
        <begin position="388"/>
        <end position="408"/>
    </location>
</feature>
<feature type="turn" evidence="4">
    <location>
        <begin position="409"/>
        <end position="412"/>
    </location>
</feature>
<feature type="helix" evidence="4">
    <location>
        <begin position="414"/>
        <end position="440"/>
    </location>
</feature>
<feature type="helix" evidence="4">
    <location>
        <begin position="446"/>
        <end position="457"/>
    </location>
</feature>
<feature type="helix" evidence="4">
    <location>
        <begin position="459"/>
        <end position="468"/>
    </location>
</feature>
<feature type="helix" evidence="4">
    <location>
        <begin position="475"/>
        <end position="482"/>
    </location>
</feature>
<feature type="helix" evidence="4">
    <location>
        <begin position="487"/>
        <end position="503"/>
    </location>
</feature>
<feature type="helix" evidence="4">
    <location>
        <begin position="505"/>
        <end position="510"/>
    </location>
</feature>
<feature type="helix" evidence="4">
    <location>
        <begin position="517"/>
        <end position="525"/>
    </location>
</feature>
<feature type="helix" evidence="4">
    <location>
        <begin position="529"/>
        <end position="553"/>
    </location>
</feature>
<feature type="turn" evidence="4">
    <location>
        <begin position="554"/>
        <end position="557"/>
    </location>
</feature>
<feature type="helix" evidence="4">
    <location>
        <begin position="560"/>
        <end position="577"/>
    </location>
</feature>
<feature type="helix" evidence="4">
    <location>
        <begin position="586"/>
        <end position="598"/>
    </location>
</feature>
<sequence length="605" mass="69410">MDATRTFFGLPNVHNVPLCLTSNLSLFPQRLLQKHTLPLKPAKKHHLVCVRSTKSSDDLEGSRPSTYFSPSLWGDHFLSVSLDRGEFDELEREIETMKPLVKDMLMSSQSSDKEKIRLIHLLVSLGSSYHFDKEIQDILKHSFTKLDDIIVGEDDLETISIMFEVFRLYGHKMSCDAFDRFRGEDGRFKESLAKDVRGMLQLFEVAHLGTPSEDIMDEASSFAQNHLDSWIGGNVSGATPHLLKHIQNSLYIPRYCNIEVLVAREYISYYEQEEGHNKILLKFAKLNFNFCQFHYIQELKTLTKWWKDLDLASKLPYIRDRLVESHLGGLGPYFEPHYSLGRIIVAKIIMTMVVVDDTYDAHATVPEVAVLTECLQRLNIGADDKLPDYLRTVLESVFEVMGEIEQEMRPKGRSYGVKQVLERFKNVAKADKQLTEWARTGDVPSFDEYMKVGLVTAGMDGYAGYCFIGMEDVSEKEAFEWLSSNPLIIQALNVMFRLANDVGTYETEINRGEVANGLNCYMKQYGVTKEEASQELRKIYSNNKKVVMEEFMNSHDHVPRQVLLRCLNFARLFDVMYTEGDGYSEPKGKIEHFMTSLYVHPIPLS</sequence>
<reference key="1">
    <citation type="journal article" date="2003" name="Plant Cell">
        <title>Biosynthesis and emission of terpenoid volatiles from Arabidopsis flowers.</title>
        <authorList>
            <person name="Chen F."/>
            <person name="Tholl D."/>
            <person name="D'Auria J.C."/>
            <person name="Farooq A."/>
            <person name="Pichersky E."/>
            <person name="Gershenzon J."/>
        </authorList>
    </citation>
    <scope>NUCLEOTIDE SEQUENCE [MRNA]</scope>
    <scope>TISSUE SPECIFICITY</scope>
    <source>
        <strain>cv. Landsberg erecta</strain>
    </source>
</reference>
<reference key="2">
    <citation type="journal article" date="2000" name="DNA Res.">
        <title>Structural analysis of Arabidopsis thaliana chromosome 3. I. Sequence features of the regions of 4,504,864 bp covered by sixty P1 and TAC clones.</title>
        <authorList>
            <person name="Sato S."/>
            <person name="Nakamura Y."/>
            <person name="Kaneko T."/>
            <person name="Katoh T."/>
            <person name="Asamizu E."/>
            <person name="Tabata S."/>
        </authorList>
    </citation>
    <scope>NUCLEOTIDE SEQUENCE [LARGE SCALE GENOMIC DNA]</scope>
    <source>
        <strain>cv. Columbia</strain>
    </source>
</reference>
<reference key="3">
    <citation type="journal article" date="2017" name="Plant J.">
        <title>Araport11: a complete reannotation of the Arabidopsis thaliana reference genome.</title>
        <authorList>
            <person name="Cheng C.Y."/>
            <person name="Krishnakumar V."/>
            <person name="Chan A.P."/>
            <person name="Thibaud-Nissen F."/>
            <person name="Schobel S."/>
            <person name="Town C.D."/>
        </authorList>
    </citation>
    <scope>GENOME REANNOTATION</scope>
    <source>
        <strain>cv. Columbia</strain>
    </source>
</reference>
<reference key="4">
    <citation type="submission" date="2009-01" db="EMBL/GenBank/DDBJ databases">
        <title>Arabidopsis ORF clones.</title>
        <authorList>
            <person name="De Los Reyes C."/>
            <person name="Quan R."/>
            <person name="Chen H."/>
            <person name="Bautista V.R."/>
            <person name="Kim C.J."/>
            <person name="Ecker J.R."/>
        </authorList>
    </citation>
    <scope>NUCLEOTIDE SEQUENCE [LARGE SCALE MRNA]</scope>
    <source>
        <strain>cv. Columbia</strain>
    </source>
</reference>
<reference key="5">
    <citation type="journal article" date="2002" name="Mol. Genet. Genomics">
        <title>Genomic analysis of the terpenoid synthase (AtTPS) gene family of Arabidopsis thaliana.</title>
        <authorList>
            <person name="Aubourg S."/>
            <person name="Lecharny A."/>
            <person name="Bohlmann J."/>
        </authorList>
    </citation>
    <scope>GENE FAMILY</scope>
    <scope>NOMENCLATURE</scope>
</reference>
<reference key="6">
    <citation type="journal article" date="2003" name="Plant Mol. Biol.">
        <title>Genome organization in Arabidopsis thaliana: a survey for genes involved in isoprenoid and chlorophyll metabolism.</title>
        <authorList>
            <person name="Lange B.M."/>
            <person name="Ghassemian M."/>
        </authorList>
    </citation>
    <scope>GENE FAMILY</scope>
</reference>
<evidence type="ECO:0000250" key="1"/>
<evidence type="ECO:0000269" key="2">
    <source>
    </source>
</evidence>
<evidence type="ECO:0000305" key="3"/>
<evidence type="ECO:0007829" key="4">
    <source>
        <dbReference type="PDB" id="7BZB"/>
    </source>
</evidence>
<evidence type="ECO:0007829" key="5">
    <source>
        <dbReference type="PDB" id="7BZC"/>
    </source>
</evidence>
<name>TPS18_ARATH</name>
<comment type="cofactor">
    <cofactor evidence="1">
        <name>Mg(2+)</name>
        <dbReference type="ChEBI" id="CHEBI:18420"/>
    </cofactor>
    <cofactor evidence="1">
        <name>Mn(2+)</name>
        <dbReference type="ChEBI" id="CHEBI:29035"/>
    </cofactor>
    <text evidence="1">Binds 3 Mg(2+) or Mn(2+) ions per subunit.</text>
</comment>
<comment type="pathway">
    <text>Secondary metabolite biosynthesis; terpenoid biosynthesis.</text>
</comment>
<comment type="subcellular location">
    <subcellularLocation>
        <location evidence="3">Cytoplasm</location>
    </subcellularLocation>
</comment>
<comment type="tissue specificity">
    <text evidence="2">Predominantly expressed in flowers and siliques but also in roots and leaves.</text>
</comment>
<comment type="domain">
    <text>The Asp-Asp-Xaa-Xaa-Asp/Glu (DDXXD/E) motif is important for the catalytic activity, presumably through binding to Mg(2+).</text>
</comment>
<comment type="similarity">
    <text evidence="3">Belongs to the terpene synthase family. Tpsa subfamily.</text>
</comment>
<dbReference type="EC" id="4.2.3.-"/>
<dbReference type="EMBL" id="AF497489">
    <property type="protein sequence ID" value="AAO85537.1"/>
    <property type="molecule type" value="mRNA"/>
</dbReference>
<dbReference type="EMBL" id="AB023038">
    <property type="protein sequence ID" value="BAB02384.1"/>
    <property type="molecule type" value="Genomic_DNA"/>
</dbReference>
<dbReference type="EMBL" id="CP002686">
    <property type="protein sequence ID" value="AEE75534.1"/>
    <property type="molecule type" value="Genomic_DNA"/>
</dbReference>
<dbReference type="EMBL" id="BT053762">
    <property type="protein sequence ID" value="ACL13989.1"/>
    <property type="molecule type" value="mRNA"/>
</dbReference>
<dbReference type="RefSeq" id="NP_188070.2">
    <property type="nucleotide sequence ID" value="NM_112312.5"/>
</dbReference>
<dbReference type="PDB" id="7BZB">
    <property type="method" value="X-ray"/>
    <property type="resolution" value="2.15 A"/>
    <property type="chains" value="A=1-605"/>
</dbReference>
<dbReference type="PDB" id="7BZC">
    <property type="method" value="X-ray"/>
    <property type="resolution" value="2.30 A"/>
    <property type="chains" value="A=1-605"/>
</dbReference>
<dbReference type="PDBsum" id="7BZB"/>
<dbReference type="PDBsum" id="7BZC"/>
<dbReference type="SMR" id="Q9LUE2"/>
<dbReference type="FunCoup" id="Q9LUE2">
    <property type="interactions" value="39"/>
</dbReference>
<dbReference type="STRING" id="3702.Q9LUE2"/>
<dbReference type="PaxDb" id="3702-AT3G14520.1"/>
<dbReference type="ProteomicsDB" id="228381"/>
<dbReference type="EnsemblPlants" id="AT3G14520.1">
    <property type="protein sequence ID" value="AT3G14520.1"/>
    <property type="gene ID" value="AT3G14520"/>
</dbReference>
<dbReference type="GeneID" id="820677"/>
<dbReference type="Gramene" id="AT3G14520.1">
    <property type="protein sequence ID" value="AT3G14520.1"/>
    <property type="gene ID" value="AT3G14520"/>
</dbReference>
<dbReference type="KEGG" id="ath:AT3G14520"/>
<dbReference type="Araport" id="AT3G14520"/>
<dbReference type="TAIR" id="AT3G14520">
    <property type="gene designation" value="TPS18"/>
</dbReference>
<dbReference type="eggNOG" id="ENOG502QUCN">
    <property type="taxonomic scope" value="Eukaryota"/>
</dbReference>
<dbReference type="HOGENOM" id="CLU_003125_7_2_1"/>
<dbReference type="InParanoid" id="Q9LUE2"/>
<dbReference type="OMA" id="YSRGRIH"/>
<dbReference type="PhylomeDB" id="Q9LUE2"/>
<dbReference type="BioCyc" id="ARA:AT3G14520-MONOMER"/>
<dbReference type="UniPathway" id="UPA00213"/>
<dbReference type="PRO" id="PR:Q9LUE2"/>
<dbReference type="Proteomes" id="UP000006548">
    <property type="component" value="Chromosome 3"/>
</dbReference>
<dbReference type="ExpressionAtlas" id="Q9LUE2">
    <property type="expression patterns" value="baseline and differential"/>
</dbReference>
<dbReference type="GO" id="GO:0005737">
    <property type="term" value="C:cytoplasm"/>
    <property type="evidence" value="ECO:0007669"/>
    <property type="project" value="UniProtKB-SubCell"/>
</dbReference>
<dbReference type="GO" id="GO:0000287">
    <property type="term" value="F:magnesium ion binding"/>
    <property type="evidence" value="ECO:0007669"/>
    <property type="project" value="InterPro"/>
</dbReference>
<dbReference type="GO" id="GO:0010333">
    <property type="term" value="F:terpene synthase activity"/>
    <property type="evidence" value="ECO:0007669"/>
    <property type="project" value="InterPro"/>
</dbReference>
<dbReference type="GO" id="GO:0016102">
    <property type="term" value="P:diterpenoid biosynthetic process"/>
    <property type="evidence" value="ECO:0007669"/>
    <property type="project" value="InterPro"/>
</dbReference>
<dbReference type="CDD" id="cd00684">
    <property type="entry name" value="Terpene_cyclase_plant_C1"/>
    <property type="match status" value="1"/>
</dbReference>
<dbReference type="FunFam" id="1.10.600.10:FF:000007">
    <property type="entry name" value="Isoprene synthase, chloroplastic"/>
    <property type="match status" value="1"/>
</dbReference>
<dbReference type="FunFam" id="1.50.10.130:FF:000001">
    <property type="entry name" value="Isoprene synthase, chloroplastic"/>
    <property type="match status" value="1"/>
</dbReference>
<dbReference type="Gene3D" id="1.10.600.10">
    <property type="entry name" value="Farnesyl Diphosphate Synthase"/>
    <property type="match status" value="1"/>
</dbReference>
<dbReference type="Gene3D" id="1.50.10.130">
    <property type="entry name" value="Terpene synthase, N-terminal domain"/>
    <property type="match status" value="1"/>
</dbReference>
<dbReference type="InterPro" id="IPR008949">
    <property type="entry name" value="Isoprenoid_synthase_dom_sf"/>
</dbReference>
<dbReference type="InterPro" id="IPR034741">
    <property type="entry name" value="Terpene_cyclase-like_1_C"/>
</dbReference>
<dbReference type="InterPro" id="IPR044814">
    <property type="entry name" value="Terpene_cyclase_plant_C1"/>
</dbReference>
<dbReference type="InterPro" id="IPR001906">
    <property type="entry name" value="Terpene_synth_N"/>
</dbReference>
<dbReference type="InterPro" id="IPR036965">
    <property type="entry name" value="Terpene_synth_N_sf"/>
</dbReference>
<dbReference type="InterPro" id="IPR050148">
    <property type="entry name" value="Terpene_synthase-like"/>
</dbReference>
<dbReference type="InterPro" id="IPR005630">
    <property type="entry name" value="Terpene_synthase_metal-bd"/>
</dbReference>
<dbReference type="InterPro" id="IPR008930">
    <property type="entry name" value="Terpenoid_cyclase/PrenylTrfase"/>
</dbReference>
<dbReference type="PANTHER" id="PTHR31225:SF93">
    <property type="entry name" value="ALPHA-HUMULENE_(-)-(E)-BETA-CARYOPHYLLENE SYNTHASE"/>
    <property type="match status" value="1"/>
</dbReference>
<dbReference type="PANTHER" id="PTHR31225">
    <property type="entry name" value="OS04G0344100 PROTEIN-RELATED"/>
    <property type="match status" value="1"/>
</dbReference>
<dbReference type="Pfam" id="PF01397">
    <property type="entry name" value="Terpene_synth"/>
    <property type="match status" value="1"/>
</dbReference>
<dbReference type="Pfam" id="PF03936">
    <property type="entry name" value="Terpene_synth_C"/>
    <property type="match status" value="1"/>
</dbReference>
<dbReference type="SFLD" id="SFLDS00005">
    <property type="entry name" value="Isoprenoid_Synthase_Type_I"/>
    <property type="match status" value="1"/>
</dbReference>
<dbReference type="SFLD" id="SFLDG01019">
    <property type="entry name" value="Terpene_Cyclase_Like_1_C_Termi"/>
    <property type="match status" value="1"/>
</dbReference>
<dbReference type="SUPFAM" id="SSF48239">
    <property type="entry name" value="Terpenoid cyclases/Protein prenyltransferases"/>
    <property type="match status" value="1"/>
</dbReference>
<dbReference type="SUPFAM" id="SSF48576">
    <property type="entry name" value="Terpenoid synthases"/>
    <property type="match status" value="1"/>
</dbReference>
<accession>Q9LUE2</accession>
<accession>Q84UU6</accession>